<keyword id="KW-0028">Amino-acid biosynthesis</keyword>
<keyword id="KW-0100">Branched-chain amino acid biosynthesis</keyword>
<keyword id="KW-0412">Isoleucine biosynthesis</keyword>
<keyword id="KW-1185">Reference proteome</keyword>
<keyword id="KW-0808">Transferase</keyword>
<accession>Q8TYM1</accession>
<gene>
    <name type="primary">cimA</name>
    <name type="ordered locus">MK0275</name>
</gene>
<comment type="function">
    <text evidence="1">Catalyzes the condensation of pyruvate and acetyl-coenzyme A to form (R)-citramalate.</text>
</comment>
<comment type="catalytic activity">
    <reaction>
        <text>pyruvate + acetyl-CoA + H2O = (3R)-citramalate + CoA + H(+)</text>
        <dbReference type="Rhea" id="RHEA:19045"/>
        <dbReference type="ChEBI" id="CHEBI:15361"/>
        <dbReference type="ChEBI" id="CHEBI:15377"/>
        <dbReference type="ChEBI" id="CHEBI:15378"/>
        <dbReference type="ChEBI" id="CHEBI:30934"/>
        <dbReference type="ChEBI" id="CHEBI:57287"/>
        <dbReference type="ChEBI" id="CHEBI:57288"/>
        <dbReference type="EC" id="2.3.3.21"/>
    </reaction>
</comment>
<comment type="pathway">
    <text>Amino-acid biosynthesis; L-isoleucine biosynthesis; 2-oxobutanoate from pyruvate: step 1/3.</text>
</comment>
<comment type="subunit">
    <text evidence="1">Homodimer.</text>
</comment>
<comment type="similarity">
    <text evidence="3">Belongs to the alpha-IPM synthase/homocitrate synthase family.</text>
</comment>
<feature type="chain" id="PRO_0000140413" description="Putative (R)-citramalate synthase CimA">
    <location>
        <begin position="1"/>
        <end position="509"/>
    </location>
</feature>
<feature type="domain" description="Pyruvate carboxyltransferase" evidence="2">
    <location>
        <begin position="14"/>
        <end position="267"/>
    </location>
</feature>
<protein>
    <recommendedName>
        <fullName>Putative (R)-citramalate synthase CimA</fullName>
        <ecNumber>2.3.3.21</ecNumber>
    </recommendedName>
</protein>
<name>CIMA_METKA</name>
<evidence type="ECO:0000250" key="1"/>
<evidence type="ECO:0000255" key="2">
    <source>
        <dbReference type="PROSITE-ProRule" id="PRU01151"/>
    </source>
</evidence>
<evidence type="ECO:0000305" key="3"/>
<sequence length="509" mass="55687">MREANADADPPDEVRIFDTTLRDGEQTPGVALTPEEKLRIARKLDEIGVDTIEAGFAAASEGELKAIRRIAREELDAEVCSMARMVKGDVDAAVEAEADAVHIVVPTSEVHVKKKLRMDREEVLERAREVVEYARDHGLTVEISTEDGTRTELEYLYEVFDACLEAGAERLGYNDTVGVMAPEGMFLAVKKLRERVGEDVILSVHCHDDFGMATANTVAAVRAGARQVHVTVNGIGERAGNAALEEVVVVLEELYGVDTGIRTERLTELSKLVERLTGVRVPPNKAVVGENAFTHESGIHADGILKDESTYEPIPPEKVGHERRFVLGKHVGTSVIRKKLKQMGVDVDDEQLLEILRRLKRLGDRGKRITEADLRAIAEDVLGRPAERDIEVEDFTTVTGKRTIPTASIVVKIDGTRKEAASTGVGPVDATIKALERALKDQGIDFELVEYRAEALTGGTDAITHVDVKLRDPETGDIVHSGSSREDIVVASLEAFIDGINSLMARKRS</sequence>
<proteinExistence type="inferred from homology"/>
<dbReference type="EC" id="2.3.3.21"/>
<dbReference type="EMBL" id="AE009439">
    <property type="protein sequence ID" value="AAM01492.1"/>
    <property type="molecule type" value="Genomic_DNA"/>
</dbReference>
<dbReference type="RefSeq" id="WP_011018647.1">
    <property type="nucleotide sequence ID" value="NC_003551.1"/>
</dbReference>
<dbReference type="SMR" id="Q8TYM1"/>
<dbReference type="STRING" id="190192.MK0275"/>
<dbReference type="PaxDb" id="190192-MK0275"/>
<dbReference type="EnsemblBacteria" id="AAM01492">
    <property type="protein sequence ID" value="AAM01492"/>
    <property type="gene ID" value="MK0275"/>
</dbReference>
<dbReference type="GeneID" id="1477578"/>
<dbReference type="KEGG" id="mka:MK0275"/>
<dbReference type="PATRIC" id="fig|190192.8.peg.278"/>
<dbReference type="HOGENOM" id="CLU_022158_0_1_2"/>
<dbReference type="InParanoid" id="Q8TYM1"/>
<dbReference type="OrthoDB" id="6555at2157"/>
<dbReference type="UniPathway" id="UPA00047">
    <property type="reaction ID" value="UER00066"/>
</dbReference>
<dbReference type="Proteomes" id="UP000001826">
    <property type="component" value="Chromosome"/>
</dbReference>
<dbReference type="GO" id="GO:0043714">
    <property type="term" value="F:(R)-citramalate synthase activity"/>
    <property type="evidence" value="ECO:0007669"/>
    <property type="project" value="InterPro"/>
</dbReference>
<dbReference type="GO" id="GO:0003852">
    <property type="term" value="F:2-isopropylmalate synthase activity"/>
    <property type="evidence" value="ECO:0007669"/>
    <property type="project" value="InterPro"/>
</dbReference>
<dbReference type="GO" id="GO:0009097">
    <property type="term" value="P:isoleucine biosynthetic process"/>
    <property type="evidence" value="ECO:0007669"/>
    <property type="project" value="UniProtKB-UniRule"/>
</dbReference>
<dbReference type="GO" id="GO:0009098">
    <property type="term" value="P:L-leucine biosynthetic process"/>
    <property type="evidence" value="ECO:0007669"/>
    <property type="project" value="InterPro"/>
</dbReference>
<dbReference type="CDD" id="cd07940">
    <property type="entry name" value="DRE_TIM_IPMS"/>
    <property type="match status" value="1"/>
</dbReference>
<dbReference type="FunFam" id="1.10.238.260:FF:000001">
    <property type="entry name" value="2-isopropylmalate synthase"/>
    <property type="match status" value="1"/>
</dbReference>
<dbReference type="FunFam" id="3.20.20.70:FF:000010">
    <property type="entry name" value="2-isopropylmalate synthase"/>
    <property type="match status" value="1"/>
</dbReference>
<dbReference type="Gene3D" id="1.10.238.260">
    <property type="match status" value="1"/>
</dbReference>
<dbReference type="Gene3D" id="3.30.160.270">
    <property type="match status" value="1"/>
</dbReference>
<dbReference type="Gene3D" id="3.20.20.70">
    <property type="entry name" value="Aldolase class I"/>
    <property type="match status" value="1"/>
</dbReference>
<dbReference type="HAMAP" id="MF_01028">
    <property type="entry name" value="CimA"/>
    <property type="match status" value="1"/>
</dbReference>
<dbReference type="InterPro" id="IPR013709">
    <property type="entry name" value="2-isopropylmalate_synth_dimer"/>
</dbReference>
<dbReference type="InterPro" id="IPR002034">
    <property type="entry name" value="AIPM/Hcit_synth_CS"/>
</dbReference>
<dbReference type="InterPro" id="IPR013785">
    <property type="entry name" value="Aldolase_TIM"/>
</dbReference>
<dbReference type="InterPro" id="IPR024890">
    <property type="entry name" value="Citramalate_synthase_CimA"/>
</dbReference>
<dbReference type="InterPro" id="IPR011830">
    <property type="entry name" value="LEU1_arch"/>
</dbReference>
<dbReference type="InterPro" id="IPR054691">
    <property type="entry name" value="LeuA/HCS_post-cat"/>
</dbReference>
<dbReference type="InterPro" id="IPR036230">
    <property type="entry name" value="LeuA_allosteric_dom_sf"/>
</dbReference>
<dbReference type="InterPro" id="IPR000891">
    <property type="entry name" value="PYR_CT"/>
</dbReference>
<dbReference type="NCBIfam" id="TIGR02090">
    <property type="entry name" value="LEU1_arch"/>
    <property type="match status" value="1"/>
</dbReference>
<dbReference type="NCBIfam" id="NF002085">
    <property type="entry name" value="PRK00915.1-2"/>
    <property type="match status" value="1"/>
</dbReference>
<dbReference type="NCBIfam" id="NF002086">
    <property type="entry name" value="PRK00915.1-3"/>
    <property type="match status" value="1"/>
</dbReference>
<dbReference type="PANTHER" id="PTHR42880:SF2">
    <property type="entry name" value="(R)-CITRAMALATE SYNTHASE CIMA"/>
    <property type="match status" value="1"/>
</dbReference>
<dbReference type="PANTHER" id="PTHR42880">
    <property type="entry name" value="HOMOCITRATE SYNTHASE"/>
    <property type="match status" value="1"/>
</dbReference>
<dbReference type="Pfam" id="PF22617">
    <property type="entry name" value="HCS_D2"/>
    <property type="match status" value="1"/>
</dbReference>
<dbReference type="Pfam" id="PF00682">
    <property type="entry name" value="HMGL-like"/>
    <property type="match status" value="1"/>
</dbReference>
<dbReference type="Pfam" id="PF08502">
    <property type="entry name" value="LeuA_dimer"/>
    <property type="match status" value="1"/>
</dbReference>
<dbReference type="SMART" id="SM00917">
    <property type="entry name" value="LeuA_dimer"/>
    <property type="match status" value="1"/>
</dbReference>
<dbReference type="SUPFAM" id="SSF110921">
    <property type="entry name" value="2-isopropylmalate synthase LeuA, allosteric (dimerisation) domain"/>
    <property type="match status" value="1"/>
</dbReference>
<dbReference type="SUPFAM" id="SSF51569">
    <property type="entry name" value="Aldolase"/>
    <property type="match status" value="1"/>
</dbReference>
<dbReference type="PROSITE" id="PS00815">
    <property type="entry name" value="AIPM_HOMOCIT_SYNTH_1"/>
    <property type="match status" value="1"/>
</dbReference>
<dbReference type="PROSITE" id="PS00816">
    <property type="entry name" value="AIPM_HOMOCIT_SYNTH_2"/>
    <property type="match status" value="1"/>
</dbReference>
<dbReference type="PROSITE" id="PS50991">
    <property type="entry name" value="PYR_CT"/>
    <property type="match status" value="1"/>
</dbReference>
<reference key="1">
    <citation type="journal article" date="2002" name="Proc. Natl. Acad. Sci. U.S.A.">
        <title>The complete genome of hyperthermophile Methanopyrus kandleri AV19 and monophyly of archaeal methanogens.</title>
        <authorList>
            <person name="Slesarev A.I."/>
            <person name="Mezhevaya K.V."/>
            <person name="Makarova K.S."/>
            <person name="Polushin N.N."/>
            <person name="Shcherbinina O.V."/>
            <person name="Shakhova V.V."/>
            <person name="Belova G.I."/>
            <person name="Aravind L."/>
            <person name="Natale D.A."/>
            <person name="Rogozin I.B."/>
            <person name="Tatusov R.L."/>
            <person name="Wolf Y.I."/>
            <person name="Stetter K.O."/>
            <person name="Malykh A.G."/>
            <person name="Koonin E.V."/>
            <person name="Kozyavkin S.A."/>
        </authorList>
    </citation>
    <scope>NUCLEOTIDE SEQUENCE [LARGE SCALE GENOMIC DNA]</scope>
    <source>
        <strain>AV19 / DSM 6324 / JCM 9639 / NBRC 100938</strain>
    </source>
</reference>
<organism>
    <name type="scientific">Methanopyrus kandleri (strain AV19 / DSM 6324 / JCM 9639 / NBRC 100938)</name>
    <dbReference type="NCBI Taxonomy" id="190192"/>
    <lineage>
        <taxon>Archaea</taxon>
        <taxon>Methanobacteriati</taxon>
        <taxon>Methanobacteriota</taxon>
        <taxon>Methanomada group</taxon>
        <taxon>Methanopyri</taxon>
        <taxon>Methanopyrales</taxon>
        <taxon>Methanopyraceae</taxon>
        <taxon>Methanopyrus</taxon>
    </lineage>
</organism>